<comment type="function">
    <text evidence="2">Catalyzes an early step in the biosynthesis of tetrapyrroles. Binds two molecules of 5-aminolevulinate per subunit, each at a distinct site, and catalyzes their condensation to form porphobilinogen.</text>
</comment>
<comment type="catalytic activity">
    <reaction evidence="2">
        <text>2 5-aminolevulinate = porphobilinogen + 2 H2O + H(+)</text>
        <dbReference type="Rhea" id="RHEA:24064"/>
        <dbReference type="ChEBI" id="CHEBI:15377"/>
        <dbReference type="ChEBI" id="CHEBI:15378"/>
        <dbReference type="ChEBI" id="CHEBI:58126"/>
        <dbReference type="ChEBI" id="CHEBI:356416"/>
        <dbReference type="EC" id="4.2.1.24"/>
    </reaction>
</comment>
<comment type="pathway">
    <text>Porphyrin-containing compound metabolism; protoporphyrin-IX biosynthesis; coproporphyrinogen-III from 5-aminolevulinate: step 1/4.</text>
</comment>
<comment type="subunit">
    <text evidence="2">Homohexamer.</text>
</comment>
<comment type="miscellaneous">
    <text evidence="2">Does not seem to have a metal requirement for activity.</text>
</comment>
<comment type="similarity">
    <text evidence="3">Belongs to the ALAD family.</text>
</comment>
<feature type="chain" id="PRO_0000140508" description="Delta-aminolevulinic acid dehydratase">
    <location>
        <begin position="1"/>
        <end position="332"/>
    </location>
</feature>
<feature type="active site" description="Schiff-base intermediate with substrate" evidence="1">
    <location>
        <position position="202"/>
    </location>
</feature>
<feature type="active site" description="Schiff-base intermediate with substrate" evidence="1">
    <location>
        <position position="256"/>
    </location>
</feature>
<feature type="binding site" evidence="1">
    <location>
        <position position="212"/>
    </location>
    <ligand>
        <name>5-aminolevulinate</name>
        <dbReference type="ChEBI" id="CHEBI:356416"/>
        <label>1</label>
    </ligand>
</feature>
<feature type="binding site" evidence="1">
    <location>
        <position position="225"/>
    </location>
    <ligand>
        <name>5-aminolevulinate</name>
        <dbReference type="ChEBI" id="CHEBI:356416"/>
        <label>1</label>
    </ligand>
</feature>
<feature type="binding site" evidence="1">
    <location>
        <position position="282"/>
    </location>
    <ligand>
        <name>5-aminolevulinate</name>
        <dbReference type="ChEBI" id="CHEBI:356416"/>
        <label>2</label>
    </ligand>
</feature>
<feature type="binding site" evidence="1">
    <location>
        <position position="321"/>
    </location>
    <ligand>
        <name>5-aminolevulinate</name>
        <dbReference type="ChEBI" id="CHEBI:356416"/>
        <label>2</label>
    </ligand>
</feature>
<accession>P42504</accession>
<evidence type="ECO:0000250" key="1"/>
<evidence type="ECO:0000269" key="2">
    <source>
    </source>
</evidence>
<evidence type="ECO:0000305" key="3"/>
<proteinExistence type="evidence at protein level"/>
<reference key="1">
    <citation type="journal article" date="1995" name="Plant Physiol.">
        <title>Nucleotide sequence of the Rhodobacter capsulatus hemB gene.</title>
        <authorList>
            <person name="Indest K."/>
            <person name="Biel A.J."/>
        </authorList>
    </citation>
    <scope>NUCLEOTIDE SEQUENCE [GENOMIC DNA]</scope>
    <source>
        <strain>PAS100</strain>
    </source>
</reference>
<reference key="2">
    <citation type="journal article" date="2004" name="BMC Biochem.">
        <title>Rhodobacter capsulatus porphobilinogen synthase, a high activity metal ion independent hexamer.</title>
        <authorList>
            <person name="Bollivar D.W."/>
            <person name="Clauson C."/>
            <person name="Lighthall R."/>
            <person name="Forbes S."/>
            <person name="Kokona B."/>
            <person name="Fairman R."/>
            <person name="Kundrat L."/>
            <person name="Jaffe E.K."/>
        </authorList>
    </citation>
    <scope>CATALYTIC ACTIVITY</scope>
    <scope>FUNCTION</scope>
    <scope>SUBUNIT</scope>
</reference>
<gene>
    <name type="primary">hemB</name>
</gene>
<dbReference type="EC" id="4.2.1.24"/>
<dbReference type="EMBL" id="U14593">
    <property type="protein sequence ID" value="AAA92884.1"/>
    <property type="molecule type" value="Genomic_DNA"/>
</dbReference>
<dbReference type="SMR" id="P42504"/>
<dbReference type="BioCyc" id="MetaCyc:MONOMER-13250"/>
<dbReference type="UniPathway" id="UPA00251">
    <property type="reaction ID" value="UER00318"/>
</dbReference>
<dbReference type="GO" id="GO:0005829">
    <property type="term" value="C:cytosol"/>
    <property type="evidence" value="ECO:0007669"/>
    <property type="project" value="TreeGrafter"/>
</dbReference>
<dbReference type="GO" id="GO:0004655">
    <property type="term" value="F:porphobilinogen synthase activity"/>
    <property type="evidence" value="ECO:0007669"/>
    <property type="project" value="UniProtKB-EC"/>
</dbReference>
<dbReference type="GO" id="GO:0008270">
    <property type="term" value="F:zinc ion binding"/>
    <property type="evidence" value="ECO:0007669"/>
    <property type="project" value="TreeGrafter"/>
</dbReference>
<dbReference type="GO" id="GO:0006782">
    <property type="term" value="P:protoporphyrinogen IX biosynthetic process"/>
    <property type="evidence" value="ECO:0007669"/>
    <property type="project" value="UniProtKB-UniPathway"/>
</dbReference>
<dbReference type="CDD" id="cd04823">
    <property type="entry name" value="ALAD_PBGS_aspartate_rich"/>
    <property type="match status" value="1"/>
</dbReference>
<dbReference type="FunFam" id="3.20.20.70:FF:000019">
    <property type="entry name" value="Delta-aminolevulinic acid dehydratase"/>
    <property type="match status" value="1"/>
</dbReference>
<dbReference type="Gene3D" id="3.20.20.70">
    <property type="entry name" value="Aldolase class I"/>
    <property type="match status" value="1"/>
</dbReference>
<dbReference type="InterPro" id="IPR001731">
    <property type="entry name" value="ALAD"/>
</dbReference>
<dbReference type="InterPro" id="IPR030656">
    <property type="entry name" value="ALAD_AS"/>
</dbReference>
<dbReference type="InterPro" id="IPR013785">
    <property type="entry name" value="Aldolase_TIM"/>
</dbReference>
<dbReference type="NCBIfam" id="NF006762">
    <property type="entry name" value="PRK09283.1"/>
    <property type="match status" value="1"/>
</dbReference>
<dbReference type="PANTHER" id="PTHR11458">
    <property type="entry name" value="DELTA-AMINOLEVULINIC ACID DEHYDRATASE"/>
    <property type="match status" value="1"/>
</dbReference>
<dbReference type="PANTHER" id="PTHR11458:SF0">
    <property type="entry name" value="DELTA-AMINOLEVULINIC ACID DEHYDRATASE"/>
    <property type="match status" value="1"/>
</dbReference>
<dbReference type="Pfam" id="PF00490">
    <property type="entry name" value="ALAD"/>
    <property type="match status" value="1"/>
</dbReference>
<dbReference type="PIRSF" id="PIRSF001415">
    <property type="entry name" value="Porphbilin_synth"/>
    <property type="match status" value="1"/>
</dbReference>
<dbReference type="PRINTS" id="PR00144">
    <property type="entry name" value="DALDHYDRTASE"/>
</dbReference>
<dbReference type="SMART" id="SM01004">
    <property type="entry name" value="ALAD"/>
    <property type="match status" value="1"/>
</dbReference>
<dbReference type="SUPFAM" id="SSF51569">
    <property type="entry name" value="Aldolase"/>
    <property type="match status" value="1"/>
</dbReference>
<dbReference type="PROSITE" id="PS00169">
    <property type="entry name" value="D_ALA_DEHYDRATASE"/>
    <property type="match status" value="1"/>
</dbReference>
<protein>
    <recommendedName>
        <fullName>Delta-aminolevulinic acid dehydratase</fullName>
        <shortName>ALAD</shortName>
        <shortName>ALADH</shortName>
        <ecNumber>4.2.1.24</ecNumber>
    </recommendedName>
    <alternativeName>
        <fullName>Porphobilinogen synthase</fullName>
    </alternativeName>
</protein>
<name>HEM2_RHOCA</name>
<keyword id="KW-0350">Heme biosynthesis</keyword>
<keyword id="KW-0456">Lyase</keyword>
<keyword id="KW-0627">Porphyrin biosynthesis</keyword>
<sequence length="332" mass="35854">MTLITPPFPTNRLRRMRRTEALRDLAQENRLSVKDLIWPIFITDVPGADVEISSMPGVVRRTMDGALKAAEGSRDAGHSRDLPVPLTDPAVKTETCEMAWQPDNFTNRVIAAMKQAVPEVAIMTDIALDPYNANGHDGLVRDGILLNDETTEALVKMALAQAAAGADILGPSDMMDGRVGAIRQAMEAAGHKDIAILSYAAKYASAFYGPFRDAVGASSALKGDKKTYQMNPANSAEALRNVARDIAEGADMVMVKPGMPYLDIVRQVKDAFGMPTYAYQVSGEYAMLMAAVQNGWLNHDKVMLESLMAFRRAGCDGVLTYFAPAAAKLIGA</sequence>
<organism>
    <name type="scientific">Rhodobacter capsulatus</name>
    <name type="common">Rhodopseudomonas capsulata</name>
    <dbReference type="NCBI Taxonomy" id="1061"/>
    <lineage>
        <taxon>Bacteria</taxon>
        <taxon>Pseudomonadati</taxon>
        <taxon>Pseudomonadota</taxon>
        <taxon>Alphaproteobacteria</taxon>
        <taxon>Rhodobacterales</taxon>
        <taxon>Rhodobacter group</taxon>
        <taxon>Rhodobacter</taxon>
    </lineage>
</organism>